<comment type="function">
    <text evidence="1">Activates expression of the rhaBAD and rhaT operons.</text>
</comment>
<comment type="subunit">
    <text evidence="1">Binds DNA as a dimer.</text>
</comment>
<comment type="subcellular location">
    <subcellularLocation>
        <location evidence="1">Cytoplasm</location>
    </subcellularLocation>
</comment>
<proteinExistence type="inferred from homology"/>
<protein>
    <recommendedName>
        <fullName evidence="1">HTH-type transcriptional activator RhaS</fullName>
    </recommendedName>
    <alternativeName>
        <fullName evidence="1">L-rhamnose operon regulatory protein RhaS</fullName>
    </alternativeName>
</protein>
<dbReference type="EMBL" id="CP000034">
    <property type="protein sequence ID" value="ABB63785.1"/>
    <property type="molecule type" value="Genomic_DNA"/>
</dbReference>
<dbReference type="RefSeq" id="WP_000217372.1">
    <property type="nucleotide sequence ID" value="NC_007606.1"/>
</dbReference>
<dbReference type="RefSeq" id="YP_405276.1">
    <property type="nucleotide sequence ID" value="NC_007606.1"/>
</dbReference>
<dbReference type="SMR" id="Q32A70"/>
<dbReference type="STRING" id="300267.SDY_3841"/>
<dbReference type="EnsemblBacteria" id="ABB63785">
    <property type="protein sequence ID" value="ABB63785"/>
    <property type="gene ID" value="SDY_3841"/>
</dbReference>
<dbReference type="KEGG" id="sdy:SDY_3841"/>
<dbReference type="PATRIC" id="fig|300267.13.peg.4536"/>
<dbReference type="HOGENOM" id="CLU_000445_88_5_6"/>
<dbReference type="Proteomes" id="UP000002716">
    <property type="component" value="Chromosome"/>
</dbReference>
<dbReference type="GO" id="GO:0005737">
    <property type="term" value="C:cytoplasm"/>
    <property type="evidence" value="ECO:0007669"/>
    <property type="project" value="UniProtKB-SubCell"/>
</dbReference>
<dbReference type="GO" id="GO:0003700">
    <property type="term" value="F:DNA-binding transcription factor activity"/>
    <property type="evidence" value="ECO:0007669"/>
    <property type="project" value="UniProtKB-UniRule"/>
</dbReference>
<dbReference type="GO" id="GO:0043565">
    <property type="term" value="F:sequence-specific DNA binding"/>
    <property type="evidence" value="ECO:0007669"/>
    <property type="project" value="InterPro"/>
</dbReference>
<dbReference type="GO" id="GO:0045893">
    <property type="term" value="P:positive regulation of DNA-templated transcription"/>
    <property type="evidence" value="ECO:0007669"/>
    <property type="project" value="UniProtKB-UniRule"/>
</dbReference>
<dbReference type="GO" id="GO:0019299">
    <property type="term" value="P:rhamnose metabolic process"/>
    <property type="evidence" value="ECO:0007669"/>
    <property type="project" value="UniProtKB-UniRule"/>
</dbReference>
<dbReference type="CDD" id="cd06977">
    <property type="entry name" value="cupin_RhaR_RhaS-like_N"/>
    <property type="match status" value="1"/>
</dbReference>
<dbReference type="FunFam" id="1.10.10.60:FF:000181">
    <property type="entry name" value="HTH-type transcriptional activator RhaS"/>
    <property type="match status" value="1"/>
</dbReference>
<dbReference type="Gene3D" id="1.10.10.60">
    <property type="entry name" value="Homeodomain-like"/>
    <property type="match status" value="1"/>
</dbReference>
<dbReference type="Gene3D" id="2.60.120.10">
    <property type="entry name" value="Jelly Rolls"/>
    <property type="match status" value="1"/>
</dbReference>
<dbReference type="HAMAP" id="MF_01534">
    <property type="entry name" value="HTH_type_RhaS"/>
    <property type="match status" value="1"/>
</dbReference>
<dbReference type="InterPro" id="IPR003313">
    <property type="entry name" value="AraC-bd"/>
</dbReference>
<dbReference type="InterPro" id="IPR050204">
    <property type="entry name" value="AraC_XylS_family_regulators"/>
</dbReference>
<dbReference type="InterPro" id="IPR009057">
    <property type="entry name" value="Homeodomain-like_sf"/>
</dbReference>
<dbReference type="InterPro" id="IPR037923">
    <property type="entry name" value="HTH-like"/>
</dbReference>
<dbReference type="InterPro" id="IPR018060">
    <property type="entry name" value="HTH_AraC"/>
</dbReference>
<dbReference type="InterPro" id="IPR018062">
    <property type="entry name" value="HTH_AraC-typ_CS"/>
</dbReference>
<dbReference type="InterPro" id="IPR047220">
    <property type="entry name" value="RhaR_RhaS-like_N"/>
</dbReference>
<dbReference type="InterPro" id="IPR014710">
    <property type="entry name" value="RmlC-like_jellyroll"/>
</dbReference>
<dbReference type="InterPro" id="IPR020449">
    <property type="entry name" value="Tscrpt_reg_AraC-type_HTH"/>
</dbReference>
<dbReference type="InterPro" id="IPR023609">
    <property type="entry name" value="Tscrpt_reg_HTH_RhaS"/>
</dbReference>
<dbReference type="NCBIfam" id="NF010028">
    <property type="entry name" value="PRK13503.1"/>
    <property type="match status" value="1"/>
</dbReference>
<dbReference type="PANTHER" id="PTHR46796:SF13">
    <property type="entry name" value="HTH-TYPE TRANSCRIPTIONAL ACTIVATOR RHAS"/>
    <property type="match status" value="1"/>
</dbReference>
<dbReference type="PANTHER" id="PTHR46796">
    <property type="entry name" value="HTH-TYPE TRANSCRIPTIONAL ACTIVATOR RHAS-RELATED"/>
    <property type="match status" value="1"/>
</dbReference>
<dbReference type="Pfam" id="PF02311">
    <property type="entry name" value="AraC_binding"/>
    <property type="match status" value="1"/>
</dbReference>
<dbReference type="Pfam" id="PF12833">
    <property type="entry name" value="HTH_18"/>
    <property type="match status" value="1"/>
</dbReference>
<dbReference type="PRINTS" id="PR00032">
    <property type="entry name" value="HTHARAC"/>
</dbReference>
<dbReference type="SMART" id="SM00342">
    <property type="entry name" value="HTH_ARAC"/>
    <property type="match status" value="1"/>
</dbReference>
<dbReference type="SUPFAM" id="SSF46689">
    <property type="entry name" value="Homeodomain-like"/>
    <property type="match status" value="2"/>
</dbReference>
<dbReference type="SUPFAM" id="SSF51215">
    <property type="entry name" value="Regulatory protein AraC"/>
    <property type="match status" value="1"/>
</dbReference>
<dbReference type="PROSITE" id="PS00041">
    <property type="entry name" value="HTH_ARAC_FAMILY_1"/>
    <property type="match status" value="1"/>
</dbReference>
<dbReference type="PROSITE" id="PS01124">
    <property type="entry name" value="HTH_ARAC_FAMILY_2"/>
    <property type="match status" value="1"/>
</dbReference>
<evidence type="ECO:0000255" key="1">
    <source>
        <dbReference type="HAMAP-Rule" id="MF_01534"/>
    </source>
</evidence>
<organism>
    <name type="scientific">Shigella dysenteriae serotype 1 (strain Sd197)</name>
    <dbReference type="NCBI Taxonomy" id="300267"/>
    <lineage>
        <taxon>Bacteria</taxon>
        <taxon>Pseudomonadati</taxon>
        <taxon>Pseudomonadota</taxon>
        <taxon>Gammaproteobacteria</taxon>
        <taxon>Enterobacterales</taxon>
        <taxon>Enterobacteriaceae</taxon>
        <taxon>Shigella</taxon>
    </lineage>
</organism>
<accession>Q32A70</accession>
<feature type="chain" id="PRO_1000068708" description="HTH-type transcriptional activator RhaS">
    <location>
        <begin position="1"/>
        <end position="278"/>
    </location>
</feature>
<feature type="domain" description="HTH araC/xylS-type" evidence="1">
    <location>
        <begin position="174"/>
        <end position="272"/>
    </location>
</feature>
<feature type="DNA-binding region" description="H-T-H motif" evidence="1">
    <location>
        <begin position="191"/>
        <end position="212"/>
    </location>
</feature>
<feature type="DNA-binding region" description="H-T-H motif" evidence="1">
    <location>
        <begin position="239"/>
        <end position="262"/>
    </location>
</feature>
<feature type="site" description="Interaction with sigma-70" evidence="1">
    <location>
        <position position="241"/>
    </location>
</feature>
<feature type="site" description="Interaction with sigma-70" evidence="1">
    <location>
        <position position="250"/>
    </location>
</feature>
<sequence>MTVLPSVDFFPSGNTSVAIEPRLPQADFPEHHHDFHEIVIVEHGTGIHVFNGQPYTITGGTVCFVRDHDRYLYEHTDNLCLTNVLYRSPDRFQFLAGLNQLLPQELDGQYPSHWRVNHSVLQQVRQLVAQMEQQEGENDLPSTASREILFMQLLLLLRKSSLQENLENSASRLNLLLAWLEDHFADEVNWDAVADQFSLSLRTLHRQLKQQTGLTPQRYLNRLRLMKARHLLRHSEASVTDIAYRCGFSDSNHFSTLFRREFNWSPRDIRQGRDGFLQ</sequence>
<name>RHAS_SHIDS</name>
<reference key="1">
    <citation type="journal article" date="2005" name="Nucleic Acids Res.">
        <title>Genome dynamics and diversity of Shigella species, the etiologic agents of bacillary dysentery.</title>
        <authorList>
            <person name="Yang F."/>
            <person name="Yang J."/>
            <person name="Zhang X."/>
            <person name="Chen L."/>
            <person name="Jiang Y."/>
            <person name="Yan Y."/>
            <person name="Tang X."/>
            <person name="Wang J."/>
            <person name="Xiong Z."/>
            <person name="Dong J."/>
            <person name="Xue Y."/>
            <person name="Zhu Y."/>
            <person name="Xu X."/>
            <person name="Sun L."/>
            <person name="Chen S."/>
            <person name="Nie H."/>
            <person name="Peng J."/>
            <person name="Xu J."/>
            <person name="Wang Y."/>
            <person name="Yuan Z."/>
            <person name="Wen Y."/>
            <person name="Yao Z."/>
            <person name="Shen Y."/>
            <person name="Qiang B."/>
            <person name="Hou Y."/>
            <person name="Yu J."/>
            <person name="Jin Q."/>
        </authorList>
    </citation>
    <scope>NUCLEOTIDE SEQUENCE [LARGE SCALE GENOMIC DNA]</scope>
    <source>
        <strain>Sd197</strain>
    </source>
</reference>
<gene>
    <name evidence="1" type="primary">rhaS</name>
    <name type="ordered locus">SDY_3841</name>
</gene>
<keyword id="KW-0010">Activator</keyword>
<keyword id="KW-0963">Cytoplasm</keyword>
<keyword id="KW-0238">DNA-binding</keyword>
<keyword id="KW-1185">Reference proteome</keyword>
<keyword id="KW-0677">Repeat</keyword>
<keyword id="KW-0684">Rhamnose metabolism</keyword>
<keyword id="KW-0804">Transcription</keyword>
<keyword id="KW-0805">Transcription regulation</keyword>